<gene>
    <name type="primary">MYO1</name>
    <name type="ordered locus">YHR023W</name>
</gene>
<feature type="chain" id="PRO_0000123484" description="Myosin-1">
    <location>
        <begin position="1"/>
        <end position="1928"/>
    </location>
</feature>
<feature type="domain" description="Myosin N-terminal SH3-like" evidence="5">
    <location>
        <begin position="8"/>
        <end position="71"/>
    </location>
</feature>
<feature type="domain" description="Myosin motor" evidence="4">
    <location>
        <begin position="75"/>
        <end position="791"/>
    </location>
</feature>
<feature type="domain" description="IQ" evidence="3">
    <location>
        <begin position="794"/>
        <end position="823"/>
    </location>
</feature>
<feature type="region of interest" description="Actin-binding" evidence="1">
    <location>
        <begin position="460"/>
        <end position="529"/>
    </location>
</feature>
<feature type="region of interest" description="Disordered" evidence="6">
    <location>
        <begin position="629"/>
        <end position="657"/>
    </location>
</feature>
<feature type="coiled-coil region" evidence="2">
    <location>
        <begin position="856"/>
        <end position="1911"/>
    </location>
</feature>
<feature type="compositionally biased region" description="Polar residues" evidence="6">
    <location>
        <begin position="629"/>
        <end position="641"/>
    </location>
</feature>
<feature type="binding site" evidence="1">
    <location>
        <begin position="180"/>
        <end position="187"/>
    </location>
    <ligand>
        <name>ATP</name>
        <dbReference type="ChEBI" id="CHEBI:30616"/>
    </ligand>
</feature>
<feature type="sequence conflict" description="In Ref. 1; CAA37894." evidence="8" ref="1">
    <original>K</original>
    <variation>I</variation>
    <location>
        <position position="36"/>
    </location>
</feature>
<feature type="sequence conflict" description="In Ref. 1; CAA37894 and 4; CAA29550." evidence="8" ref="1 4">
    <original>I</original>
    <variation>T</variation>
    <location>
        <position position="46"/>
    </location>
</feature>
<feature type="sequence conflict" description="In Ref. 1; CAA37894 and 4; CAA29550." evidence="8" ref="1 4">
    <original>V</original>
    <variation>S</variation>
    <location>
        <position position="59"/>
    </location>
</feature>
<feature type="sequence conflict" description="In Ref. 1; CAA37894." evidence="8" ref="1">
    <original>L</original>
    <variation>F</variation>
    <location>
        <position position="86"/>
    </location>
</feature>
<feature type="sequence conflict" description="In Ref. 1; CAA37894 and 4; CAA29550." evidence="8" ref="1 4">
    <location>
        <position position="330"/>
    </location>
</feature>
<feature type="sequence conflict" description="In Ref. 1; CAA37894 and 4; CAA29550." evidence="8" ref="1 4">
    <original>N</original>
    <variation>S</variation>
    <location>
        <position position="343"/>
    </location>
</feature>
<feature type="sequence conflict" description="In Ref. 1; CAA37894." evidence="8" ref="1">
    <original>QQAKFI</original>
    <variation>TKLSSL</variation>
    <location>
        <begin position="421"/>
        <end position="426"/>
    </location>
</feature>
<feature type="sequence conflict" description="In Ref. 1; CAA37894." evidence="8" ref="1">
    <original>D</original>
    <variation>S</variation>
    <location>
        <position position="515"/>
    </location>
</feature>
<feature type="sequence conflict" description="In Ref. 1; CAA37894 and 4; CAA29550." evidence="8" ref="1 4">
    <original>SKGPPTG</original>
    <variation>ARGHDR</variation>
    <location>
        <begin position="529"/>
        <end position="535"/>
    </location>
</feature>
<feature type="sequence conflict" description="In Ref. 1; CAA37894 and 4; CAA29550." evidence="8" ref="1 4">
    <original>D</original>
    <variation>V</variation>
    <location>
        <position position="541"/>
    </location>
</feature>
<feature type="sequence conflict" description="In Ref. 1; CAA37894." evidence="8" ref="1">
    <original>TD</original>
    <variation>LM</variation>
    <location>
        <begin position="550"/>
        <end position="551"/>
    </location>
</feature>
<feature type="sequence conflict" description="In Ref. 1; CAA37894." evidence="8" ref="1">
    <original>R</original>
    <variation>A</variation>
    <location>
        <position position="573"/>
    </location>
</feature>
<feature type="sequence conflict" description="In Ref. 1; CAA37894." evidence="8" ref="1">
    <original>H</original>
    <variation>D</variation>
    <location>
        <position position="582"/>
    </location>
</feature>
<feature type="sequence conflict" description="In Ref. 1; CAA37894." evidence="8" ref="1">
    <original>EYTVEGWLSKNK</original>
    <variation>NTLWKAGYPKT</variation>
    <location>
        <begin position="588"/>
        <end position="599"/>
    </location>
</feature>
<feature type="sequence conflict" description="In Ref. 4; CAA29550." evidence="8" ref="4">
    <location>
        <position position="599"/>
    </location>
</feature>
<feature type="sequence conflict" description="In Ref. 1; CAA37894 and 4; CAA29550." evidence="8" ref="1 4">
    <original>EKSSSA</original>
    <variation>GKNLLVC</variation>
    <location>
        <begin position="627"/>
        <end position="632"/>
    </location>
</feature>
<feature type="sequence conflict" description="In Ref. 1; CAA37894 and 4; CAA29550." evidence="8" ref="1 4">
    <original>R</original>
    <variation>S</variation>
    <location>
        <position position="695"/>
    </location>
</feature>
<feature type="sequence conflict" description="In Ref. 4; CAA29550." evidence="8" ref="4">
    <original>ENSTTTT</original>
    <variation>RKFNHHD</variation>
    <location>
        <begin position="736"/>
        <end position="742"/>
    </location>
</feature>
<feature type="sequence conflict" description="In Ref. 1; CAA37894 and 4; CAA29550." evidence="8" ref="1 4">
    <original>E</original>
    <variation>R</variation>
    <location>
        <position position="756"/>
    </location>
</feature>
<feature type="sequence conflict" description="In Ref. 1; CAA37894." evidence="8" ref="1">
    <original>NTKLFFKAGVLA</original>
    <variation>ILTVFQKLEYWS</variation>
    <location>
        <begin position="773"/>
        <end position="784"/>
    </location>
</feature>
<feature type="sequence conflict" description="In Ref. 1; CAA37894." evidence="8" ref="1">
    <original>KL</original>
    <variation>NV</variation>
    <location>
        <begin position="793"/>
        <end position="794"/>
    </location>
</feature>
<feature type="sequence conflict" description="In Ref. 1; CAA37894." evidence="8" ref="1">
    <original>N</original>
    <variation>T</variation>
    <location>
        <position position="896"/>
    </location>
</feature>
<feature type="sequence conflict" description="In Ref. 1; CAA37894." evidence="8" ref="1">
    <original>N</original>
    <variation>NSQITKINTNITETPQSTYIGERPKRVICGN</variation>
    <location>
        <position position="900"/>
    </location>
</feature>
<feature type="sequence conflict" description="In Ref. 1; CAA37894." evidence="8" ref="1">
    <original>N</original>
    <variation>I</variation>
    <location>
        <position position="906"/>
    </location>
</feature>
<feature type="sequence conflict" description="In Ref. 1; CAA37894." evidence="8" ref="1">
    <original>N</original>
    <variation>K</variation>
    <location>
        <position position="911"/>
    </location>
</feature>
<feature type="sequence conflict" description="In Ref. 1; CAA37894." evidence="8" ref="1">
    <original>NESLLNRVKTSSETLQ</original>
    <variation>RIAIKILKPAINIT</variation>
    <location>
        <begin position="915"/>
        <end position="930"/>
    </location>
</feature>
<feature type="sequence conflict" description="In Ref. 1; CAA37894." evidence="8" ref="1">
    <original>DDLVSE</original>
    <variation>MTLFL</variation>
    <location>
        <begin position="934"/>
        <end position="939"/>
    </location>
</feature>
<feature type="sequence conflict" description="In Ref. 1; CAA37894." evidence="8" ref="1">
    <original>AQNLEEAH</original>
    <variation>RKILKKLD</variation>
    <location>
        <begin position="951"/>
        <end position="958"/>
    </location>
</feature>
<feature type="sequence conflict" description="In Ref. 1; CAA37894." evidence="8" ref="1">
    <original>S</original>
    <variation>C</variation>
    <location>
        <position position="1002"/>
    </location>
</feature>
<feature type="sequence conflict" description="In Ref. 1; CAA37894." evidence="8" ref="1">
    <original>L</original>
    <variation>D</variation>
    <location>
        <position position="1049"/>
    </location>
</feature>
<feature type="sequence conflict" description="In Ref. 1; CAA37894." evidence="8" ref="1">
    <original>C</original>
    <variation>S</variation>
    <location>
        <position position="1056"/>
    </location>
</feature>
<feature type="sequence conflict" description="In Ref. 1; CAA37894." evidence="8" ref="1">
    <original>M</original>
    <variation>I</variation>
    <location>
        <position position="1060"/>
    </location>
</feature>
<feature type="sequence conflict" description="In Ref. 1; CAA37894." evidence="8" ref="1">
    <original>A</original>
    <variation>E</variation>
    <location>
        <position position="1085"/>
    </location>
</feature>
<feature type="sequence conflict" description="In Ref. 1; CAA37894." evidence="8" ref="1">
    <original>V</original>
    <variation>C</variation>
    <location>
        <position position="1123"/>
    </location>
</feature>
<feature type="sequence conflict" description="In Ref. 1; CAA37894." evidence="8" ref="1">
    <original>L</original>
    <variation>S</variation>
    <location>
        <position position="1133"/>
    </location>
</feature>
<feature type="sequence conflict" description="In Ref. 1; CAA37894." evidence="8" ref="1">
    <original>KSN</original>
    <variation>NLI</variation>
    <location>
        <begin position="1144"/>
        <end position="1146"/>
    </location>
</feature>
<feature type="sequence conflict" description="In Ref. 1; CAA37894." evidence="8" ref="1">
    <original>RETKEQEQKK</original>
    <variation>TRKKEEQDKE</variation>
    <location>
        <begin position="1159"/>
        <end position="1168"/>
    </location>
</feature>
<feature type="sequence conflict" description="In Ref. 1; CAA37894." evidence="8" ref="1">
    <original>SKIKELEARLSQEISLNQYLNKRISG</original>
    <variation>ELKVKEWKARCHRKYLKSILKQKNIR</variation>
    <location>
        <begin position="1179"/>
        <end position="1204"/>
    </location>
</feature>
<feature type="sequence conflict" description="In Ref. 1; CAA37894." evidence="8" ref="1">
    <original>P</original>
    <variation>S</variation>
    <location>
        <position position="1224"/>
    </location>
</feature>
<feature type="sequence conflict" description="In Ref. 1; CAA37894." evidence="8" ref="1">
    <original>E</original>
    <variation>Q</variation>
    <location>
        <position position="1228"/>
    </location>
</feature>
<feature type="sequence conflict" description="In Ref. 1; CAA37894." evidence="8" ref="1">
    <original>E</original>
    <variation>Q</variation>
    <location>
        <position position="1253"/>
    </location>
</feature>
<feature type="sequence conflict" description="In Ref. 1; CAA37894." evidence="8" ref="1">
    <original>PDKESDINKLMLE</original>
    <variation>LTKSLILTNGNAS</variation>
    <location>
        <begin position="1311"/>
        <end position="1323"/>
    </location>
</feature>
<feature type="sequence conflict" description="In Ref. 1; CAA37894." evidence="8" ref="1">
    <original>D</original>
    <variation>H</variation>
    <location>
        <position position="1400"/>
    </location>
</feature>
<feature type="sequence conflict" description="In Ref. 1; CAA37894." evidence="8" ref="1">
    <original>SEQLDRLQKDLESTERQKELLSSTIKQQKQQFENCMDDLQGNELRLREHIHALKQAEEDVKNMASIIEKLKTQNKQKEKLIWEREMERNDSDMQLQETLLE</original>
    <variation>P</variation>
    <location>
        <begin position="1454"/>
        <end position="1554"/>
    </location>
</feature>
<feature type="sequence conflict" description="In Ref. 1; CAA37894." evidence="8" ref="1">
    <original>D</original>
    <variation>V</variation>
    <location>
        <position position="1568"/>
    </location>
</feature>
<feature type="sequence conflict" description="In Ref. 1; CAA37894." evidence="8" ref="1">
    <original>DLLKQLDHYTKVVEMLN</original>
    <variation>SEAARSLYKSGGNVD</variation>
    <location>
        <begin position="1630"/>
        <end position="1646"/>
    </location>
</feature>
<feature type="sequence conflict" description="In Ref. 1; CAA37894." evidence="8" ref="1">
    <location>
        <begin position="1699"/>
        <end position="1705"/>
    </location>
</feature>
<feature type="sequence conflict" description="In Ref. 1; CAA37894." evidence="8" ref="1">
    <original>TLQLQMEQNSRNG</original>
    <variation>NTTANGTKFKEW</variation>
    <location>
        <begin position="1725"/>
        <end position="1737"/>
    </location>
</feature>
<feature type="sequence conflict" description="In Ref. 1; CAA37894." evidence="8" ref="1">
    <original>FDDE</original>
    <variation>LMM</variation>
    <location>
        <begin position="1754"/>
        <end position="1757"/>
    </location>
</feature>
<feature type="sequence conflict" description="In Ref. 1; CAA37894." evidence="8" ref="1">
    <original>D</original>
    <variation>E</variation>
    <location>
        <position position="1777"/>
    </location>
</feature>
<feature type="sequence conflict" description="In Ref. 1; CAA37894." evidence="8" ref="1">
    <original>R</original>
    <variation>T</variation>
    <location>
        <position position="1788"/>
    </location>
</feature>
<feature type="sequence conflict" description="In Ref. 1; CAA37894." evidence="8" ref="1">
    <original>S</original>
    <variation>D</variation>
    <location>
        <position position="1825"/>
    </location>
</feature>
<feature type="sequence conflict" description="In Ref. 1; CAA37894." evidence="8" ref="1">
    <original>S</original>
    <variation>W</variation>
    <location>
        <position position="1882"/>
    </location>
</feature>
<feature type="sequence conflict" description="In Ref. 1; CAA37894." evidence="8" ref="1">
    <original>FWK</original>
    <variation>NSGKRLDADDL</variation>
    <location>
        <begin position="1902"/>
        <end position="1904"/>
    </location>
</feature>
<proteinExistence type="evidence at protein level"/>
<keyword id="KW-0009">Actin-binding</keyword>
<keyword id="KW-0067">ATP-binding</keyword>
<keyword id="KW-0175">Coiled coil</keyword>
<keyword id="KW-0505">Motor protein</keyword>
<keyword id="KW-0518">Myosin</keyword>
<keyword id="KW-0547">Nucleotide-binding</keyword>
<keyword id="KW-1185">Reference proteome</keyword>
<reference key="1">
    <citation type="journal article" date="1990" name="Nucleic Acids Res.">
        <title>The MYO1 gene from Saccharomyces cerevisiae: its complete nucleotide sequence.</title>
        <authorList>
            <person name="Sweeney F.P."/>
            <person name="Watts F.Z."/>
            <person name="Pocklington M.J."/>
            <person name="Orr E."/>
        </authorList>
    </citation>
    <scope>NUCLEOTIDE SEQUENCE [GENOMIC DNA]</scope>
    <source>
        <strain>ATCC 204508 / S288c</strain>
    </source>
</reference>
<reference key="2">
    <citation type="journal article" date="1994" name="Science">
        <title>Complete nucleotide sequence of Saccharomyces cerevisiae chromosome VIII.</title>
        <authorList>
            <person name="Johnston M."/>
            <person name="Andrews S."/>
            <person name="Brinkman R."/>
            <person name="Cooper J."/>
            <person name="Ding H."/>
            <person name="Dover J."/>
            <person name="Du Z."/>
            <person name="Favello A."/>
            <person name="Fulton L."/>
            <person name="Gattung S."/>
            <person name="Geisel C."/>
            <person name="Kirsten J."/>
            <person name="Kucaba T."/>
            <person name="Hillier L.W."/>
            <person name="Jier M."/>
            <person name="Johnston L."/>
            <person name="Langston Y."/>
            <person name="Latreille P."/>
            <person name="Louis E.J."/>
            <person name="Macri C."/>
            <person name="Mardis E."/>
            <person name="Menezes S."/>
            <person name="Mouser L."/>
            <person name="Nhan M."/>
            <person name="Rifkin L."/>
            <person name="Riles L."/>
            <person name="St Peter H."/>
            <person name="Trevaskis E."/>
            <person name="Vaughan K."/>
            <person name="Vignati D."/>
            <person name="Wilcox L."/>
            <person name="Wohldman P."/>
            <person name="Waterston R."/>
            <person name="Wilson R."/>
            <person name="Vaudin M."/>
        </authorList>
    </citation>
    <scope>NUCLEOTIDE SEQUENCE [LARGE SCALE GENOMIC DNA]</scope>
    <source>
        <strain>ATCC 204508 / S288c</strain>
    </source>
</reference>
<reference key="3">
    <citation type="journal article" date="2014" name="G3 (Bethesda)">
        <title>The reference genome sequence of Saccharomyces cerevisiae: Then and now.</title>
        <authorList>
            <person name="Engel S.R."/>
            <person name="Dietrich F.S."/>
            <person name="Fisk D.G."/>
            <person name="Binkley G."/>
            <person name="Balakrishnan R."/>
            <person name="Costanzo M.C."/>
            <person name="Dwight S.S."/>
            <person name="Hitz B.C."/>
            <person name="Karra K."/>
            <person name="Nash R.S."/>
            <person name="Weng S."/>
            <person name="Wong E.D."/>
            <person name="Lloyd P."/>
            <person name="Skrzypek M.S."/>
            <person name="Miyasato S.R."/>
            <person name="Simison M."/>
            <person name="Cherry J.M."/>
        </authorList>
    </citation>
    <scope>GENOME REANNOTATION</scope>
    <source>
        <strain>ATCC 204508 / S288c</strain>
    </source>
</reference>
<reference key="4">
    <citation type="journal article" date="1987" name="EMBO J.">
        <title>The yeast MYO1 gene encoding a myosin-like protein required for cell division.</title>
        <authorList>
            <person name="Watts F.Z."/>
            <person name="Shiels G."/>
            <person name="Orr E."/>
        </authorList>
    </citation>
    <scope>NUCLEOTIDE SEQUENCE [GENOMIC DNA] OF 1-760</scope>
    <source>
        <strain>ATCC 204508 / S288c</strain>
    </source>
</reference>
<reference key="5">
    <citation type="journal article" date="2003" name="Nature">
        <title>Global analysis of protein expression in yeast.</title>
        <authorList>
            <person name="Ghaemmaghami S."/>
            <person name="Huh W.-K."/>
            <person name="Bower K."/>
            <person name="Howson R.W."/>
            <person name="Belle A."/>
            <person name="Dephoure N."/>
            <person name="O'Shea E.K."/>
            <person name="Weissman J.S."/>
        </authorList>
    </citation>
    <scope>LEVEL OF PROTEIN EXPRESSION [LARGE SCALE ANALYSIS]</scope>
</reference>
<reference key="6">
    <citation type="journal article" date="2007" name="J. Proteome Res.">
        <title>Large-scale phosphorylation analysis of alpha-factor-arrested Saccharomyces cerevisiae.</title>
        <authorList>
            <person name="Li X."/>
            <person name="Gerber S.A."/>
            <person name="Rudner A.D."/>
            <person name="Beausoleil S.A."/>
            <person name="Haas W."/>
            <person name="Villen J."/>
            <person name="Elias J.E."/>
            <person name="Gygi S.P."/>
        </authorList>
    </citation>
    <scope>IDENTIFICATION BY MASS SPECTROMETRY [LARGE SCALE ANALYSIS]</scope>
    <source>
        <strain>ADR376</strain>
    </source>
</reference>
<reference key="7">
    <citation type="journal article" date="2008" name="Mol. Cell. Proteomics">
        <title>A multidimensional chromatography technology for in-depth phosphoproteome analysis.</title>
        <authorList>
            <person name="Albuquerque C.P."/>
            <person name="Smolka M.B."/>
            <person name="Payne S.H."/>
            <person name="Bafna V."/>
            <person name="Eng J."/>
            <person name="Zhou H."/>
        </authorList>
    </citation>
    <scope>IDENTIFICATION BY MASS SPECTROMETRY [LARGE SCALE ANALYSIS]</scope>
</reference>
<reference key="8">
    <citation type="journal article" date="2009" name="Science">
        <title>Global analysis of Cdk1 substrate phosphorylation sites provides insights into evolution.</title>
        <authorList>
            <person name="Holt L.J."/>
            <person name="Tuch B.B."/>
            <person name="Villen J."/>
            <person name="Johnson A.D."/>
            <person name="Gygi S.P."/>
            <person name="Morgan D.O."/>
        </authorList>
    </citation>
    <scope>IDENTIFICATION BY MASS SPECTROMETRY [LARGE SCALE ANALYSIS]</scope>
</reference>
<organism>
    <name type="scientific">Saccharomyces cerevisiae (strain ATCC 204508 / S288c)</name>
    <name type="common">Baker's yeast</name>
    <dbReference type="NCBI Taxonomy" id="559292"/>
    <lineage>
        <taxon>Eukaryota</taxon>
        <taxon>Fungi</taxon>
        <taxon>Dikarya</taxon>
        <taxon>Ascomycota</taxon>
        <taxon>Saccharomycotina</taxon>
        <taxon>Saccharomycetes</taxon>
        <taxon>Saccharomycetales</taxon>
        <taxon>Saccharomycetaceae</taxon>
        <taxon>Saccharomyces</taxon>
    </lineage>
</organism>
<name>MYO1_YEAST</name>
<protein>
    <recommendedName>
        <fullName>Myosin-1</fullName>
    </recommendedName>
    <alternativeName>
        <fullName>Type II myosin</fullName>
    </alternativeName>
</protein>
<accession>P08964</accession>
<accession>D3DKX0</accession>
<sequence>MTGGQSCSSNMIVWIPDEKEVFVKGELMSTDINKNKFTGQEEQIGIVHPLDSTEVSNLVQVRISDVFPVNPSTFDKVENMSELTHLNEPSVLYNLEKRYDCDLIYTYSGLFLVAINPYHNLNLYSEDHINLYHNKHNRLSKSRLDENSHEKLPPHIFAIAEEAYENLLSEGKDQSILVTGESGAGKTENTKKILQYLASITSGSPSNIAPVSGSSIVESFEMKILQSNPILESFGNAQTVRNNNSSRFGKFIKIEFNEHGMINGAHIEWYLLEKSRIVHQNSKERNYHIFYQLLSGLDDSELKNLRLKSRNVKDYKILSNSNQDIIPGINDVENFKELLSALNIIGFSKDQIRWIFQVVAIILLIGNIEFVSDRAEQASFKNDVSAICSNLGVDEKDFQTAILRPRSKAGKEWVSQSKNSQQAKFILNALSRNLYERLFGYIVDMINKNLDHGSATLNYIGLLDIAGFEIFENNSFEQLCINYTNEKLQQFFNNHMFVLEQSEYLKENIQWDYIDYGKDLQLTIDLIESKGPPTGVLPLLDEEAVLPKSTDESFYSKLISTWDQNSSKFKRSRLKNGFILKHYAGDVEYTVEGWLSKNKDPLNDNLLSLLSSSQNDIISKLFQPEGEKSSSAGVEANISNQEVKKSARTSTFKTTSSRHREQQITLLNQLASTHPHFVRCIIPNNVKKVKTFNRRLILDQLRCNGVLEGIRLAREGYPNRIAFQEFFQRYRILYPENSTTTTFSSKLKASTKQNCEFLLTSLQLDTKVYKIGNTKLFFKAGVLADLEKQKDVKLNNIMIKLTATIRGYTVRKEITYHLQKLKKTRVIGNTFRLYNRLVKEDPWFNLFIRIKPLLTSSNDMTRTKKFNEQINKLKNDLQEMESKKKFLEEKNQKTVNELENTQDLLNQEKENLRKNESLLNRVKTSSETLQKQFDDLVSEKDEISREKLEVAQNLEEAHQKIQGLQETIREREATLEKLHSKNNELIKQISDLNCDISKEQSSQSLIKESKLKLENEIKRLKDVINSKEEEIKSFNDKLSSSEEDLDIKLVTLEKNCNIAMSRLQSLVTENSDLRSKNENFKKEKAALNNQLKNKESELLKMKEKIDNHKKELATFSKQRDDAVSEHGKITAELKETRIQLTEYKSNYQKIKEEYSNFQRETKEQEQKKRNSLVESLNDSKIKELEARLSQEISLNQYLNKRISGNSVETNISSTRRSTSYSDDPLDKEDIIKKYYDLQLAFTEITRNLENEIEEKKNLISRLRFTETRLASSSFEDQKIKAQMKKLKKLIQDMDPSIPLDSILNEPLDNCPDKESDINKLMLEVDYLKRQLDIETRAHYDAENAISALHSKFRKIQGESSLSSSDIYKLKFEASEERVKSLEDKLKTMPLRDRTNLPVGDIIKNRDSISKYEEEIRYYKLENYKLQEILNESNGKLSQLTLDLRQSKSKEALLSEQLDRLQKDLESTERQKELLSSTIKQQKQQFENCMDDLQGNELRLREHIHALKQAEEDVKNMASIIEKLKTQNKQKEKLIWEREMERNDSDMQLQETLLELKRVQDVKKILSDDLAHLKERLSAVEDRSQYTDEINRLKEELNCSLKAETNLKKEFATLKYKLETSTNDSEAKISDLLKQLDHYTKVVEMLNNEKDAISLAEKELYQKYEALNTECESLKGKIVSLTKIKQELESDLNQKTDALQISNAALSSSTQKNKEITEKIKYLEETLQLQMEQNSRNGELVKTLQASCNGYKDKFDDEKQKNIDLYEENQTLQKLNTDLQLQLKNLHERLSDTTEKNAWLSKIHELENMVSLETDLKYEEMKKNKSLERAVEELQTKNSQQTDVIELANKNRSEFEEATLKYEAQISDLEKYISQQELEMKKSIRDNSSYRDKVQEMAQEIEFWKSRYESTMIGSKNIDSNNAQSKIFS</sequence>
<comment type="function">
    <text>Required for cell division.</text>
</comment>
<comment type="interaction">
    <interactant intactId="EBI-11650">
        <id>P08964</id>
    </interactant>
    <interactant intactId="EBI-10988">
        <id>P53141</id>
        <label>MLC1</label>
    </interactant>
    <organismsDiffer>false</organismsDiffer>
    <experiments>5</experiments>
</comment>
<comment type="interaction">
    <interactant intactId="EBI-11650">
        <id>P08964</id>
    </interactant>
    <interactant intactId="EBI-10999">
        <id>Q06580</id>
        <label>MLC2</label>
    </interactant>
    <organismsDiffer>false</organismsDiffer>
    <experiments>4</experiments>
</comment>
<comment type="miscellaneous">
    <text evidence="7">Present with 2140 molecules/cell in log phase SD medium.</text>
</comment>
<comment type="similarity">
    <text evidence="8">Belongs to the TRAFAC class myosin-kinesin ATPase superfamily. Myosin family.</text>
</comment>
<dbReference type="EMBL" id="X53947">
    <property type="protein sequence ID" value="CAA37894.1"/>
    <property type="molecule type" value="Genomic_DNA"/>
</dbReference>
<dbReference type="EMBL" id="U10399">
    <property type="protein sequence ID" value="AAB68872.1"/>
    <property type="molecule type" value="Genomic_DNA"/>
</dbReference>
<dbReference type="EMBL" id="X06187">
    <property type="protein sequence ID" value="CAA29550.1"/>
    <property type="molecule type" value="Genomic_DNA"/>
</dbReference>
<dbReference type="EMBL" id="BK006934">
    <property type="protein sequence ID" value="DAA06714.1"/>
    <property type="molecule type" value="Genomic_DNA"/>
</dbReference>
<dbReference type="PIR" id="S46773">
    <property type="entry name" value="S46773"/>
</dbReference>
<dbReference type="RefSeq" id="NP_011888.1">
    <property type="nucleotide sequence ID" value="NM_001179153.1"/>
</dbReference>
<dbReference type="SMR" id="P08964"/>
<dbReference type="BioGRID" id="36454">
    <property type="interactions" value="238"/>
</dbReference>
<dbReference type="ComplexPortal" id="CPX-1426">
    <property type="entry name" value="Myosin class II complex"/>
</dbReference>
<dbReference type="DIP" id="DIP-808N"/>
<dbReference type="FunCoup" id="P08964">
    <property type="interactions" value="513"/>
</dbReference>
<dbReference type="IntAct" id="P08964">
    <property type="interactions" value="24"/>
</dbReference>
<dbReference type="MINT" id="P08964"/>
<dbReference type="STRING" id="4932.YHR023W"/>
<dbReference type="iPTMnet" id="P08964"/>
<dbReference type="PaxDb" id="4932-YHR023W"/>
<dbReference type="PeptideAtlas" id="P08964"/>
<dbReference type="EnsemblFungi" id="YHR023W_mRNA">
    <property type="protein sequence ID" value="YHR023W"/>
    <property type="gene ID" value="YHR023W"/>
</dbReference>
<dbReference type="GeneID" id="856418"/>
<dbReference type="KEGG" id="sce:YHR023W"/>
<dbReference type="AGR" id="SGD:S000001065"/>
<dbReference type="SGD" id="S000001065">
    <property type="gene designation" value="MYO1"/>
</dbReference>
<dbReference type="VEuPathDB" id="FungiDB:YHR023W"/>
<dbReference type="eggNOG" id="KOG0161">
    <property type="taxonomic scope" value="Eukaryota"/>
</dbReference>
<dbReference type="GeneTree" id="ENSGT00940000175738"/>
<dbReference type="HOGENOM" id="CLU_000192_5_3_1"/>
<dbReference type="InParanoid" id="P08964"/>
<dbReference type="OMA" id="DVRFLHK"/>
<dbReference type="OrthoDB" id="6108017at2759"/>
<dbReference type="BioCyc" id="YEAST:G3O-31084-MONOMER"/>
<dbReference type="Reactome" id="R-SCE-5627123">
    <property type="pathway name" value="RHO GTPases activate PAKs"/>
</dbReference>
<dbReference type="BioGRID-ORCS" id="856418">
    <property type="hits" value="1 hit in 10 CRISPR screens"/>
</dbReference>
<dbReference type="PRO" id="PR:P08964"/>
<dbReference type="Proteomes" id="UP000002311">
    <property type="component" value="Chromosome VIII"/>
</dbReference>
<dbReference type="RNAct" id="P08964">
    <property type="molecule type" value="protein"/>
</dbReference>
<dbReference type="GO" id="GO:0005935">
    <property type="term" value="C:cellular bud neck"/>
    <property type="evidence" value="ECO:0000314"/>
    <property type="project" value="SGD"/>
</dbReference>
<dbReference type="GO" id="GO:0000142">
    <property type="term" value="C:cellular bud neck contractile ring"/>
    <property type="evidence" value="ECO:0000314"/>
    <property type="project" value="SGD"/>
</dbReference>
<dbReference type="GO" id="GO:0005737">
    <property type="term" value="C:cytoplasm"/>
    <property type="evidence" value="ECO:0000318"/>
    <property type="project" value="GO_Central"/>
</dbReference>
<dbReference type="GO" id="GO:0000131">
    <property type="term" value="C:incipient cellular bud site"/>
    <property type="evidence" value="ECO:0000314"/>
    <property type="project" value="SGD"/>
</dbReference>
<dbReference type="GO" id="GO:0110085">
    <property type="term" value="C:mitotic actomyosin contractile ring"/>
    <property type="evidence" value="ECO:0000318"/>
    <property type="project" value="GO_Central"/>
</dbReference>
<dbReference type="GO" id="GO:0032982">
    <property type="term" value="C:myosin filament"/>
    <property type="evidence" value="ECO:0000318"/>
    <property type="project" value="GO_Central"/>
</dbReference>
<dbReference type="GO" id="GO:0016460">
    <property type="term" value="C:myosin II complex"/>
    <property type="evidence" value="ECO:0000353"/>
    <property type="project" value="SGD"/>
</dbReference>
<dbReference type="GO" id="GO:0051015">
    <property type="term" value="F:actin filament binding"/>
    <property type="evidence" value="ECO:0000318"/>
    <property type="project" value="GO_Central"/>
</dbReference>
<dbReference type="GO" id="GO:0005524">
    <property type="term" value="F:ATP binding"/>
    <property type="evidence" value="ECO:0007669"/>
    <property type="project" value="UniProtKB-KW"/>
</dbReference>
<dbReference type="GO" id="GO:0000146">
    <property type="term" value="F:microfilament motor activity"/>
    <property type="evidence" value="ECO:0000318"/>
    <property type="project" value="GO_Central"/>
</dbReference>
<dbReference type="GO" id="GO:0032033">
    <property type="term" value="F:myosin II light chain binding"/>
    <property type="evidence" value="ECO:0000353"/>
    <property type="project" value="SGD"/>
</dbReference>
<dbReference type="GO" id="GO:0032027">
    <property type="term" value="F:myosin light chain binding"/>
    <property type="evidence" value="ECO:0000353"/>
    <property type="project" value="SGD"/>
</dbReference>
<dbReference type="GO" id="GO:1903475">
    <property type="term" value="P:mitotic actomyosin contractile ring assembly"/>
    <property type="evidence" value="ECO:0000315"/>
    <property type="project" value="SGD"/>
</dbReference>
<dbReference type="GO" id="GO:1902404">
    <property type="term" value="P:mitotic actomyosin contractile ring contraction"/>
    <property type="evidence" value="ECO:0000315"/>
    <property type="project" value="SGD"/>
</dbReference>
<dbReference type="GO" id="GO:0000281">
    <property type="term" value="P:mitotic cytokinesis"/>
    <property type="evidence" value="ECO:0000315"/>
    <property type="project" value="SGD"/>
</dbReference>
<dbReference type="GO" id="GO:0031671">
    <property type="term" value="P:primary cell septum biogenesis"/>
    <property type="evidence" value="ECO:0000315"/>
    <property type="project" value="SGD"/>
</dbReference>
<dbReference type="GO" id="GO:1904498">
    <property type="term" value="P:protein localization to mitotic actomyosin contractile ring"/>
    <property type="evidence" value="ECO:0000314"/>
    <property type="project" value="SGD"/>
</dbReference>
<dbReference type="GO" id="GO:0000920">
    <property type="term" value="P:septum digestion after cytokinesis"/>
    <property type="evidence" value="ECO:0000315"/>
    <property type="project" value="SGD"/>
</dbReference>
<dbReference type="CDD" id="cd01377">
    <property type="entry name" value="MYSc_class_II"/>
    <property type="match status" value="1"/>
</dbReference>
<dbReference type="FunFam" id="1.20.120.720:FF:000038">
    <property type="entry name" value="Class II myosin"/>
    <property type="match status" value="1"/>
</dbReference>
<dbReference type="FunFam" id="1.10.10.820:FF:000001">
    <property type="entry name" value="Myosin heavy chain"/>
    <property type="match status" value="1"/>
</dbReference>
<dbReference type="Gene3D" id="1.10.10.820">
    <property type="match status" value="1"/>
</dbReference>
<dbReference type="Gene3D" id="1.20.5.340">
    <property type="match status" value="1"/>
</dbReference>
<dbReference type="Gene3D" id="1.20.5.4820">
    <property type="match status" value="1"/>
</dbReference>
<dbReference type="Gene3D" id="1.20.58.530">
    <property type="match status" value="1"/>
</dbReference>
<dbReference type="Gene3D" id="3.40.850.10">
    <property type="entry name" value="Kinesin motor domain"/>
    <property type="match status" value="1"/>
</dbReference>
<dbReference type="Gene3D" id="1.20.120.720">
    <property type="entry name" value="Myosin VI head, motor domain, U50 subdomain"/>
    <property type="match status" value="1"/>
</dbReference>
<dbReference type="InterPro" id="IPR036961">
    <property type="entry name" value="Kinesin_motor_dom_sf"/>
</dbReference>
<dbReference type="InterPro" id="IPR001609">
    <property type="entry name" value="Myosin_head_motor_dom-like"/>
</dbReference>
<dbReference type="InterPro" id="IPR004009">
    <property type="entry name" value="Myosin_N"/>
</dbReference>
<dbReference type="InterPro" id="IPR027417">
    <property type="entry name" value="P-loop_NTPase"/>
</dbReference>
<dbReference type="PANTHER" id="PTHR13140">
    <property type="entry name" value="MYOSIN"/>
    <property type="match status" value="1"/>
</dbReference>
<dbReference type="PANTHER" id="PTHR13140:SF857">
    <property type="entry name" value="MYOSIN-11"/>
    <property type="match status" value="1"/>
</dbReference>
<dbReference type="Pfam" id="PF00063">
    <property type="entry name" value="Myosin_head"/>
    <property type="match status" value="1"/>
</dbReference>
<dbReference type="PRINTS" id="PR00193">
    <property type="entry name" value="MYOSINHEAVY"/>
</dbReference>
<dbReference type="SMART" id="SM00242">
    <property type="entry name" value="MYSc"/>
    <property type="match status" value="1"/>
</dbReference>
<dbReference type="SUPFAM" id="SSF52540">
    <property type="entry name" value="P-loop containing nucleoside triphosphate hydrolases"/>
    <property type="match status" value="1"/>
</dbReference>
<dbReference type="SUPFAM" id="SSF57997">
    <property type="entry name" value="Tropomyosin"/>
    <property type="match status" value="1"/>
</dbReference>
<dbReference type="PROSITE" id="PS50096">
    <property type="entry name" value="IQ"/>
    <property type="match status" value="1"/>
</dbReference>
<dbReference type="PROSITE" id="PS51456">
    <property type="entry name" value="MYOSIN_MOTOR"/>
    <property type="match status" value="1"/>
</dbReference>
<dbReference type="PROSITE" id="PS51844">
    <property type="entry name" value="SH3_LIKE"/>
    <property type="match status" value="1"/>
</dbReference>
<evidence type="ECO:0000250" key="1"/>
<evidence type="ECO:0000255" key="2"/>
<evidence type="ECO:0000255" key="3">
    <source>
        <dbReference type="PROSITE-ProRule" id="PRU00116"/>
    </source>
</evidence>
<evidence type="ECO:0000255" key="4">
    <source>
        <dbReference type="PROSITE-ProRule" id="PRU00782"/>
    </source>
</evidence>
<evidence type="ECO:0000255" key="5">
    <source>
        <dbReference type="PROSITE-ProRule" id="PRU01190"/>
    </source>
</evidence>
<evidence type="ECO:0000256" key="6">
    <source>
        <dbReference type="SAM" id="MobiDB-lite"/>
    </source>
</evidence>
<evidence type="ECO:0000269" key="7">
    <source>
    </source>
</evidence>
<evidence type="ECO:0000305" key="8"/>